<protein>
    <recommendedName>
        <fullName>Protein kinase wis1</fullName>
        <ecNumber>2.7.12.2</ecNumber>
    </recommendedName>
    <alternativeName>
        <fullName>Protein kinase sty2</fullName>
    </alternativeName>
</protein>
<reference key="1">
    <citation type="journal article" date="1991" name="EMBO J.">
        <title>The wis1 protein kinase is a dosage-dependent regulator of mitosis in Schizosaccharomyces pombe.</title>
        <authorList>
            <person name="Warbrick E."/>
            <person name="Fantes P.A."/>
        </authorList>
    </citation>
    <scope>NUCLEOTIDE SEQUENCE [GENOMIC DNA]</scope>
    <source>
        <strain>972 / ATCC 24843</strain>
    </source>
</reference>
<reference key="2">
    <citation type="journal article" date="2002" name="Nature">
        <title>The genome sequence of Schizosaccharomyces pombe.</title>
        <authorList>
            <person name="Wood V."/>
            <person name="Gwilliam R."/>
            <person name="Rajandream M.A."/>
            <person name="Lyne M.H."/>
            <person name="Lyne R."/>
            <person name="Stewart A."/>
            <person name="Sgouros J.G."/>
            <person name="Peat N."/>
            <person name="Hayles J."/>
            <person name="Baker S.G."/>
            <person name="Basham D."/>
            <person name="Bowman S."/>
            <person name="Brooks K."/>
            <person name="Brown D."/>
            <person name="Brown S."/>
            <person name="Chillingworth T."/>
            <person name="Churcher C.M."/>
            <person name="Collins M."/>
            <person name="Connor R."/>
            <person name="Cronin A."/>
            <person name="Davis P."/>
            <person name="Feltwell T."/>
            <person name="Fraser A."/>
            <person name="Gentles S."/>
            <person name="Goble A."/>
            <person name="Hamlin N."/>
            <person name="Harris D.E."/>
            <person name="Hidalgo J."/>
            <person name="Hodgson G."/>
            <person name="Holroyd S."/>
            <person name="Hornsby T."/>
            <person name="Howarth S."/>
            <person name="Huckle E.J."/>
            <person name="Hunt S."/>
            <person name="Jagels K."/>
            <person name="James K.D."/>
            <person name="Jones L."/>
            <person name="Jones M."/>
            <person name="Leather S."/>
            <person name="McDonald S."/>
            <person name="McLean J."/>
            <person name="Mooney P."/>
            <person name="Moule S."/>
            <person name="Mungall K.L."/>
            <person name="Murphy L.D."/>
            <person name="Niblett D."/>
            <person name="Odell C."/>
            <person name="Oliver K."/>
            <person name="O'Neil S."/>
            <person name="Pearson D."/>
            <person name="Quail M.A."/>
            <person name="Rabbinowitsch E."/>
            <person name="Rutherford K.M."/>
            <person name="Rutter S."/>
            <person name="Saunders D."/>
            <person name="Seeger K."/>
            <person name="Sharp S."/>
            <person name="Skelton J."/>
            <person name="Simmonds M.N."/>
            <person name="Squares R."/>
            <person name="Squares S."/>
            <person name="Stevens K."/>
            <person name="Taylor K."/>
            <person name="Taylor R.G."/>
            <person name="Tivey A."/>
            <person name="Walsh S.V."/>
            <person name="Warren T."/>
            <person name="Whitehead S."/>
            <person name="Woodward J.R."/>
            <person name="Volckaert G."/>
            <person name="Aert R."/>
            <person name="Robben J."/>
            <person name="Grymonprez B."/>
            <person name="Weltjens I."/>
            <person name="Vanstreels E."/>
            <person name="Rieger M."/>
            <person name="Schaefer M."/>
            <person name="Mueller-Auer S."/>
            <person name="Gabel C."/>
            <person name="Fuchs M."/>
            <person name="Duesterhoeft A."/>
            <person name="Fritzc C."/>
            <person name="Holzer E."/>
            <person name="Moestl D."/>
            <person name="Hilbert H."/>
            <person name="Borzym K."/>
            <person name="Langer I."/>
            <person name="Beck A."/>
            <person name="Lehrach H."/>
            <person name="Reinhardt R."/>
            <person name="Pohl T.M."/>
            <person name="Eger P."/>
            <person name="Zimmermann W."/>
            <person name="Wedler H."/>
            <person name="Wambutt R."/>
            <person name="Purnelle B."/>
            <person name="Goffeau A."/>
            <person name="Cadieu E."/>
            <person name="Dreano S."/>
            <person name="Gloux S."/>
            <person name="Lelaure V."/>
            <person name="Mottier S."/>
            <person name="Galibert F."/>
            <person name="Aves S.J."/>
            <person name="Xiang Z."/>
            <person name="Hunt C."/>
            <person name="Moore K."/>
            <person name="Hurst S.M."/>
            <person name="Lucas M."/>
            <person name="Rochet M."/>
            <person name="Gaillardin C."/>
            <person name="Tallada V.A."/>
            <person name="Garzon A."/>
            <person name="Thode G."/>
            <person name="Daga R.R."/>
            <person name="Cruzado L."/>
            <person name="Jimenez J."/>
            <person name="Sanchez M."/>
            <person name="del Rey F."/>
            <person name="Benito J."/>
            <person name="Dominguez A."/>
            <person name="Revuelta J.L."/>
            <person name="Moreno S."/>
            <person name="Armstrong J."/>
            <person name="Forsburg S.L."/>
            <person name="Cerutti L."/>
            <person name="Lowe T."/>
            <person name="McCombie W.R."/>
            <person name="Paulsen I."/>
            <person name="Potashkin J."/>
            <person name="Shpakovski G.V."/>
            <person name="Ussery D."/>
            <person name="Barrell B.G."/>
            <person name="Nurse P."/>
        </authorList>
    </citation>
    <scope>NUCLEOTIDE SEQUENCE [LARGE SCALE GENOMIC DNA]</scope>
    <source>
        <strain>972 / ATCC 24843</strain>
    </source>
</reference>
<reference key="3">
    <citation type="journal article" date="2008" name="J. Proteome Res.">
        <title>Phosphoproteome analysis of fission yeast.</title>
        <authorList>
            <person name="Wilson-Grady J.T."/>
            <person name="Villen J."/>
            <person name="Gygi S.P."/>
        </authorList>
    </citation>
    <scope>PHOSPHORYLATION [LARGE SCALE ANALYSIS] AT SER-168 AND SER-253</scope>
    <scope>IDENTIFICATION BY MASS SPECTROMETRY</scope>
</reference>
<name>WIS1_SCHPO</name>
<feature type="chain" id="PRO_0000086817" description="Protein kinase wis1">
    <location>
        <begin position="1"/>
        <end position="605"/>
    </location>
</feature>
<feature type="domain" description="Protein kinase" evidence="2">
    <location>
        <begin position="320"/>
        <end position="579"/>
    </location>
</feature>
<feature type="region of interest" description="Disordered" evidence="4">
    <location>
        <begin position="1"/>
        <end position="141"/>
    </location>
</feature>
<feature type="region of interest" description="Disordered" evidence="4">
    <location>
        <begin position="188"/>
        <end position="263"/>
    </location>
</feature>
<feature type="compositionally biased region" description="Polar residues" evidence="4">
    <location>
        <begin position="1"/>
        <end position="20"/>
    </location>
</feature>
<feature type="compositionally biased region" description="Low complexity" evidence="4">
    <location>
        <begin position="31"/>
        <end position="73"/>
    </location>
</feature>
<feature type="compositionally biased region" description="Low complexity" evidence="4">
    <location>
        <begin position="90"/>
        <end position="105"/>
    </location>
</feature>
<feature type="compositionally biased region" description="Basic and acidic residues" evidence="4">
    <location>
        <begin position="106"/>
        <end position="115"/>
    </location>
</feature>
<feature type="compositionally biased region" description="Polar residues" evidence="4">
    <location>
        <begin position="188"/>
        <end position="200"/>
    </location>
</feature>
<feature type="compositionally biased region" description="Low complexity" evidence="4">
    <location>
        <begin position="244"/>
        <end position="256"/>
    </location>
</feature>
<feature type="active site" description="Proton acceptor" evidence="2 3">
    <location>
        <position position="441"/>
    </location>
</feature>
<feature type="binding site" evidence="2">
    <location>
        <begin position="326"/>
        <end position="334"/>
    </location>
    <ligand>
        <name>ATP</name>
        <dbReference type="ChEBI" id="CHEBI:30616"/>
    </ligand>
</feature>
<feature type="binding site" evidence="2">
    <location>
        <position position="349"/>
    </location>
    <ligand>
        <name>ATP</name>
        <dbReference type="ChEBI" id="CHEBI:30616"/>
    </ligand>
</feature>
<feature type="modified residue" description="Phosphoserine" evidence="5">
    <location>
        <position position="168"/>
    </location>
</feature>
<feature type="modified residue" description="Phosphoserine" evidence="5">
    <location>
        <position position="253"/>
    </location>
</feature>
<feature type="modified residue" description="Phosphoserine" evidence="1">
    <location>
        <position position="469"/>
    </location>
</feature>
<feature type="modified residue" description="Phosphothreonine" evidence="1">
    <location>
        <position position="473"/>
    </location>
</feature>
<accession>P33886</accession>
<proteinExistence type="evidence at protein level"/>
<gene>
    <name type="primary">wis1</name>
    <name type="synonym">spc2</name>
    <name type="synonym">sty2</name>
    <name type="ORF">SPBC409.07c</name>
</gene>
<comment type="function">
    <text>Dosage-dependent regulator of mitosis with serine/ threonine protein kinase activity. May play a role in the integration of nutritional sensing with the control over entry into mitosis. It may interact with cdc25, wee1 and win1. May activate sty1.</text>
</comment>
<comment type="catalytic activity">
    <reaction>
        <text>L-seryl-[protein] + ATP = O-phospho-L-seryl-[protein] + ADP + H(+)</text>
        <dbReference type="Rhea" id="RHEA:17989"/>
        <dbReference type="Rhea" id="RHEA-COMP:9863"/>
        <dbReference type="Rhea" id="RHEA-COMP:11604"/>
        <dbReference type="ChEBI" id="CHEBI:15378"/>
        <dbReference type="ChEBI" id="CHEBI:29999"/>
        <dbReference type="ChEBI" id="CHEBI:30616"/>
        <dbReference type="ChEBI" id="CHEBI:83421"/>
        <dbReference type="ChEBI" id="CHEBI:456216"/>
        <dbReference type="EC" id="2.7.12.2"/>
    </reaction>
</comment>
<comment type="catalytic activity">
    <reaction>
        <text>L-threonyl-[protein] + ATP = O-phospho-L-threonyl-[protein] + ADP + H(+)</text>
        <dbReference type="Rhea" id="RHEA:46608"/>
        <dbReference type="Rhea" id="RHEA-COMP:11060"/>
        <dbReference type="Rhea" id="RHEA-COMP:11605"/>
        <dbReference type="ChEBI" id="CHEBI:15378"/>
        <dbReference type="ChEBI" id="CHEBI:30013"/>
        <dbReference type="ChEBI" id="CHEBI:30616"/>
        <dbReference type="ChEBI" id="CHEBI:61977"/>
        <dbReference type="ChEBI" id="CHEBI:456216"/>
        <dbReference type="EC" id="2.7.12.2"/>
    </reaction>
</comment>
<comment type="catalytic activity">
    <reaction>
        <text>L-tyrosyl-[protein] + ATP = O-phospho-L-tyrosyl-[protein] + ADP + H(+)</text>
        <dbReference type="Rhea" id="RHEA:10596"/>
        <dbReference type="Rhea" id="RHEA-COMP:10136"/>
        <dbReference type="Rhea" id="RHEA-COMP:20101"/>
        <dbReference type="ChEBI" id="CHEBI:15378"/>
        <dbReference type="ChEBI" id="CHEBI:30616"/>
        <dbReference type="ChEBI" id="CHEBI:46858"/>
        <dbReference type="ChEBI" id="CHEBI:61978"/>
        <dbReference type="ChEBI" id="CHEBI:456216"/>
        <dbReference type="EC" id="2.7.12.2"/>
    </reaction>
</comment>
<comment type="PTM">
    <text>Dephosphorylated by pyp1 and pyp2.</text>
</comment>
<comment type="similarity">
    <text evidence="6">Belongs to the protein kinase superfamily. STE Ser/Thr protein kinase family. MAP kinase kinase subfamily.</text>
</comment>
<sequence>MSSPNNQPLSCSLRQLSISPTAPPGDVGTPGSLLSLSSSSSSNTDSSGSSLGSLSLNSNSSGSDNDSKVSSPSREIPSDPPLPRAVPTVRLGRSTSSRSRNSLNLDMKDPSEKPRRSLPTAAGQNNIGSPPTPPGPFPGGLSTDIQEKLKAFHASRSKSMPEVVNKISSPTTPIVGMGQRGSYPLPNSQLAGRLSNSPVKSPNMPESGLAKSLAAARNPLLNRPTSFNRQTRIRRAPPGKLDLSNSNPTSPVSPSSMASRRGLNIPPTLKQAVSETPFSTFSDILDAKSGTLNFKNKAVLNSEGVNFSSGSSFRINMSEIIKLEELGKGNYGVVYKALHQPTGVTMALKEIRLSLEEATFNQIIMELDILHKAVSPYIVDFYGAFFVEGSVFICMEYMDAGSMDKLYAGGIKDEGVLARTAYAVVQGLKTLKEEHNIIHRDVKPTNVLVNSNGQVKLCDFGVSGNLVASISKTNIGCQSYMAPERIRVGGPTNGVLTYTVQADVWSLGLTILEMALGAYPYPPESYTSIFAQLSAICDGDPPSLPDSFSPEARDFVNKCLNKNPSLRPDYHELANHPWLLKYQNADVDMASWAKGALKEKGEKRS</sequence>
<evidence type="ECO:0000250" key="1"/>
<evidence type="ECO:0000255" key="2">
    <source>
        <dbReference type="PROSITE-ProRule" id="PRU00159"/>
    </source>
</evidence>
<evidence type="ECO:0000255" key="3">
    <source>
        <dbReference type="PROSITE-ProRule" id="PRU10027"/>
    </source>
</evidence>
<evidence type="ECO:0000256" key="4">
    <source>
        <dbReference type="SAM" id="MobiDB-lite"/>
    </source>
</evidence>
<evidence type="ECO:0000269" key="5">
    <source>
    </source>
</evidence>
<evidence type="ECO:0000305" key="6"/>
<organism>
    <name type="scientific">Schizosaccharomyces pombe (strain 972 / ATCC 24843)</name>
    <name type="common">Fission yeast</name>
    <dbReference type="NCBI Taxonomy" id="284812"/>
    <lineage>
        <taxon>Eukaryota</taxon>
        <taxon>Fungi</taxon>
        <taxon>Dikarya</taxon>
        <taxon>Ascomycota</taxon>
        <taxon>Taphrinomycotina</taxon>
        <taxon>Schizosaccharomycetes</taxon>
        <taxon>Schizosaccharomycetales</taxon>
        <taxon>Schizosaccharomycetaceae</taxon>
        <taxon>Schizosaccharomyces</taxon>
    </lineage>
</organism>
<keyword id="KW-0067">ATP-binding</keyword>
<keyword id="KW-0131">Cell cycle</keyword>
<keyword id="KW-0132">Cell division</keyword>
<keyword id="KW-0418">Kinase</keyword>
<keyword id="KW-0498">Mitosis</keyword>
<keyword id="KW-0547">Nucleotide-binding</keyword>
<keyword id="KW-0597">Phosphoprotein</keyword>
<keyword id="KW-1185">Reference proteome</keyword>
<keyword id="KW-0723">Serine/threonine-protein kinase</keyword>
<keyword id="KW-0808">Transferase</keyword>
<dbReference type="EC" id="2.7.12.2"/>
<dbReference type="EMBL" id="X62631">
    <property type="protein sequence ID" value="CAA44499.1"/>
    <property type="molecule type" value="Genomic_DNA"/>
</dbReference>
<dbReference type="EMBL" id="CU329671">
    <property type="protein sequence ID" value="CAB52609.1"/>
    <property type="molecule type" value="Genomic_DNA"/>
</dbReference>
<dbReference type="PIR" id="S18648">
    <property type="entry name" value="S18648"/>
</dbReference>
<dbReference type="RefSeq" id="NP_595457.1">
    <property type="nucleotide sequence ID" value="NM_001021367.2"/>
</dbReference>
<dbReference type="SMR" id="P33886"/>
<dbReference type="BioGRID" id="277570">
    <property type="interactions" value="43"/>
</dbReference>
<dbReference type="FunCoup" id="P33886">
    <property type="interactions" value="292"/>
</dbReference>
<dbReference type="IntAct" id="P33886">
    <property type="interactions" value="2"/>
</dbReference>
<dbReference type="STRING" id="284812.P33886"/>
<dbReference type="iPTMnet" id="P33886"/>
<dbReference type="PaxDb" id="4896-SPBC409.07c.1"/>
<dbReference type="EnsemblFungi" id="SPBC409.07c.1">
    <property type="protein sequence ID" value="SPBC409.07c.1:pep"/>
    <property type="gene ID" value="SPBC409.07c"/>
</dbReference>
<dbReference type="GeneID" id="2541055"/>
<dbReference type="KEGG" id="spo:2541055"/>
<dbReference type="PomBase" id="SPBC409.07c">
    <property type="gene designation" value="wis1"/>
</dbReference>
<dbReference type="VEuPathDB" id="FungiDB:SPBC409.07c"/>
<dbReference type="eggNOG" id="KOG0581">
    <property type="taxonomic scope" value="Eukaryota"/>
</dbReference>
<dbReference type="HOGENOM" id="CLU_000288_79_1_1"/>
<dbReference type="InParanoid" id="P33886"/>
<dbReference type="OMA" id="SVFICME"/>
<dbReference type="PhylomeDB" id="P33886"/>
<dbReference type="BRENDA" id="2.7.12.2">
    <property type="organism ID" value="5613"/>
</dbReference>
<dbReference type="Reactome" id="R-SPO-112411">
    <property type="pathway name" value="MAPK1 (ERK2) activation"/>
</dbReference>
<dbReference type="Reactome" id="R-SPO-445144">
    <property type="pathway name" value="Signal transduction by L1"/>
</dbReference>
<dbReference type="Reactome" id="R-SPO-5674135">
    <property type="pathway name" value="MAP2K and MAPK activation"/>
</dbReference>
<dbReference type="Reactome" id="R-SPO-5674499">
    <property type="pathway name" value="Negative feedback regulation of MAPK pathway"/>
</dbReference>
<dbReference type="PRO" id="PR:P33886"/>
<dbReference type="Proteomes" id="UP000002485">
    <property type="component" value="Chromosome II"/>
</dbReference>
<dbReference type="GO" id="GO:0005737">
    <property type="term" value="C:cytoplasm"/>
    <property type="evidence" value="ECO:0000314"/>
    <property type="project" value="PomBase"/>
</dbReference>
<dbReference type="GO" id="GO:0005829">
    <property type="term" value="C:cytosol"/>
    <property type="evidence" value="ECO:0007005"/>
    <property type="project" value="PomBase"/>
</dbReference>
<dbReference type="GO" id="GO:1990315">
    <property type="term" value="C:Mcs4 RR-MAPKKK complex"/>
    <property type="evidence" value="ECO:0000314"/>
    <property type="project" value="PomBase"/>
</dbReference>
<dbReference type="GO" id="GO:0005634">
    <property type="term" value="C:nucleus"/>
    <property type="evidence" value="ECO:0000314"/>
    <property type="project" value="PomBase"/>
</dbReference>
<dbReference type="GO" id="GO:0005524">
    <property type="term" value="F:ATP binding"/>
    <property type="evidence" value="ECO:0007669"/>
    <property type="project" value="UniProtKB-KW"/>
</dbReference>
<dbReference type="GO" id="GO:0004708">
    <property type="term" value="F:MAP kinase kinase activity"/>
    <property type="evidence" value="ECO:0000314"/>
    <property type="project" value="PomBase"/>
</dbReference>
<dbReference type="GO" id="GO:0004672">
    <property type="term" value="F:protein kinase activity"/>
    <property type="evidence" value="ECO:0000314"/>
    <property type="project" value="PomBase"/>
</dbReference>
<dbReference type="GO" id="GO:0106310">
    <property type="term" value="F:protein serine kinase activity"/>
    <property type="evidence" value="ECO:0007669"/>
    <property type="project" value="RHEA"/>
</dbReference>
<dbReference type="GO" id="GO:0004674">
    <property type="term" value="F:protein serine/threonine kinase activity"/>
    <property type="evidence" value="ECO:0007669"/>
    <property type="project" value="UniProtKB-KW"/>
</dbReference>
<dbReference type="GO" id="GO:0004713">
    <property type="term" value="F:protein tyrosine kinase activity"/>
    <property type="evidence" value="ECO:0007669"/>
    <property type="project" value="RHEA"/>
</dbReference>
<dbReference type="GO" id="GO:0051301">
    <property type="term" value="P:cell division"/>
    <property type="evidence" value="ECO:0007669"/>
    <property type="project" value="UniProtKB-KW"/>
</dbReference>
<dbReference type="GO" id="GO:0071474">
    <property type="term" value="P:cellular hyperosmotic response"/>
    <property type="evidence" value="ECO:0000318"/>
    <property type="project" value="GO_Central"/>
</dbReference>
<dbReference type="GO" id="GO:0071470">
    <property type="term" value="P:cellular response to osmotic stress"/>
    <property type="evidence" value="ECO:0000315"/>
    <property type="project" value="PomBase"/>
</dbReference>
<dbReference type="GO" id="GO:0000165">
    <property type="term" value="P:MAPK cascade"/>
    <property type="evidence" value="ECO:0000318"/>
    <property type="project" value="GO_Central"/>
</dbReference>
<dbReference type="GO" id="GO:0038066">
    <property type="term" value="P:p38MAPK cascade"/>
    <property type="evidence" value="ECO:0000314"/>
    <property type="project" value="PomBase"/>
</dbReference>
<dbReference type="GO" id="GO:0010971">
    <property type="term" value="P:positive regulation of G2/M transition of mitotic cell cycle"/>
    <property type="evidence" value="ECO:0000315"/>
    <property type="project" value="PomBase"/>
</dbReference>
<dbReference type="GO" id="GO:0090055">
    <property type="term" value="P:positive regulation of silent mating-type cassette heterochromatin formation"/>
    <property type="evidence" value="ECO:0000269"/>
    <property type="project" value="PomBase"/>
</dbReference>
<dbReference type="CDD" id="cd06622">
    <property type="entry name" value="PKc_PBS2_like"/>
    <property type="match status" value="1"/>
</dbReference>
<dbReference type="FunFam" id="3.30.200.20:FF:000341">
    <property type="entry name" value="MAP kinase kinase PBS2"/>
    <property type="match status" value="1"/>
</dbReference>
<dbReference type="Gene3D" id="3.30.200.20">
    <property type="entry name" value="Phosphorylase Kinase, domain 1"/>
    <property type="match status" value="1"/>
</dbReference>
<dbReference type="Gene3D" id="1.10.510.10">
    <property type="entry name" value="Transferase(Phosphotransferase) domain 1"/>
    <property type="match status" value="1"/>
</dbReference>
<dbReference type="InterPro" id="IPR011009">
    <property type="entry name" value="Kinase-like_dom_sf"/>
</dbReference>
<dbReference type="InterPro" id="IPR000719">
    <property type="entry name" value="Prot_kinase_dom"/>
</dbReference>
<dbReference type="InterPro" id="IPR017441">
    <property type="entry name" value="Protein_kinase_ATP_BS"/>
</dbReference>
<dbReference type="InterPro" id="IPR008271">
    <property type="entry name" value="Ser/Thr_kinase_AS"/>
</dbReference>
<dbReference type="PANTHER" id="PTHR48013">
    <property type="entry name" value="DUAL SPECIFICITY MITOGEN-ACTIVATED PROTEIN KINASE KINASE 5-RELATED"/>
    <property type="match status" value="1"/>
</dbReference>
<dbReference type="PANTHER" id="PTHR48013:SF25">
    <property type="entry name" value="MAP KINASE KINASE PBS2"/>
    <property type="match status" value="1"/>
</dbReference>
<dbReference type="Pfam" id="PF00069">
    <property type="entry name" value="Pkinase"/>
    <property type="match status" value="1"/>
</dbReference>
<dbReference type="SMART" id="SM00220">
    <property type="entry name" value="S_TKc"/>
    <property type="match status" value="1"/>
</dbReference>
<dbReference type="SUPFAM" id="SSF56112">
    <property type="entry name" value="Protein kinase-like (PK-like)"/>
    <property type="match status" value="1"/>
</dbReference>
<dbReference type="PROSITE" id="PS00107">
    <property type="entry name" value="PROTEIN_KINASE_ATP"/>
    <property type="match status" value="1"/>
</dbReference>
<dbReference type="PROSITE" id="PS50011">
    <property type="entry name" value="PROTEIN_KINASE_DOM"/>
    <property type="match status" value="1"/>
</dbReference>
<dbReference type="PROSITE" id="PS00108">
    <property type="entry name" value="PROTEIN_KINASE_ST"/>
    <property type="match status" value="1"/>
</dbReference>